<reference key="1">
    <citation type="journal article" date="2010" name="Genome Biol.">
        <title>Structure and dynamics of the pan-genome of Streptococcus pneumoniae and closely related species.</title>
        <authorList>
            <person name="Donati C."/>
            <person name="Hiller N.L."/>
            <person name="Tettelin H."/>
            <person name="Muzzi A."/>
            <person name="Croucher N.J."/>
            <person name="Angiuoli S.V."/>
            <person name="Oggioni M."/>
            <person name="Dunning Hotopp J.C."/>
            <person name="Hu F.Z."/>
            <person name="Riley D.R."/>
            <person name="Covacci A."/>
            <person name="Mitchell T.J."/>
            <person name="Bentley S.D."/>
            <person name="Kilian M."/>
            <person name="Ehrlich G.D."/>
            <person name="Rappuoli R."/>
            <person name="Moxon E.R."/>
            <person name="Masignani V."/>
        </authorList>
    </citation>
    <scope>NUCLEOTIDE SEQUENCE [LARGE SCALE GENOMIC DNA]</scope>
    <source>
        <strain>P1031</strain>
    </source>
</reference>
<dbReference type="EC" id="6.1.1.3" evidence="1"/>
<dbReference type="EMBL" id="CP000920">
    <property type="protein sequence ID" value="ACO21023.1"/>
    <property type="molecule type" value="Genomic_DNA"/>
</dbReference>
<dbReference type="RefSeq" id="WP_000608339.1">
    <property type="nucleotide sequence ID" value="NC_012467.1"/>
</dbReference>
<dbReference type="SMR" id="C1CLX1"/>
<dbReference type="KEGG" id="spp:SPP_1650"/>
<dbReference type="HOGENOM" id="CLU_008554_3_2_9"/>
<dbReference type="GO" id="GO:0005737">
    <property type="term" value="C:cytoplasm"/>
    <property type="evidence" value="ECO:0007669"/>
    <property type="project" value="UniProtKB-SubCell"/>
</dbReference>
<dbReference type="GO" id="GO:0005524">
    <property type="term" value="F:ATP binding"/>
    <property type="evidence" value="ECO:0007669"/>
    <property type="project" value="UniProtKB-UniRule"/>
</dbReference>
<dbReference type="GO" id="GO:0140096">
    <property type="term" value="F:catalytic activity, acting on a protein"/>
    <property type="evidence" value="ECO:0007669"/>
    <property type="project" value="UniProtKB-ARBA"/>
</dbReference>
<dbReference type="GO" id="GO:0046872">
    <property type="term" value="F:metal ion binding"/>
    <property type="evidence" value="ECO:0007669"/>
    <property type="project" value="UniProtKB-KW"/>
</dbReference>
<dbReference type="GO" id="GO:0004829">
    <property type="term" value="F:threonine-tRNA ligase activity"/>
    <property type="evidence" value="ECO:0007669"/>
    <property type="project" value="UniProtKB-UniRule"/>
</dbReference>
<dbReference type="GO" id="GO:0016740">
    <property type="term" value="F:transferase activity"/>
    <property type="evidence" value="ECO:0007669"/>
    <property type="project" value="UniProtKB-ARBA"/>
</dbReference>
<dbReference type="GO" id="GO:0000049">
    <property type="term" value="F:tRNA binding"/>
    <property type="evidence" value="ECO:0007669"/>
    <property type="project" value="UniProtKB-KW"/>
</dbReference>
<dbReference type="GO" id="GO:0006435">
    <property type="term" value="P:threonyl-tRNA aminoacylation"/>
    <property type="evidence" value="ECO:0007669"/>
    <property type="project" value="UniProtKB-UniRule"/>
</dbReference>
<dbReference type="CDD" id="cd01667">
    <property type="entry name" value="TGS_ThrRS"/>
    <property type="match status" value="1"/>
</dbReference>
<dbReference type="CDD" id="cd00860">
    <property type="entry name" value="ThrRS_anticodon"/>
    <property type="match status" value="1"/>
</dbReference>
<dbReference type="CDD" id="cd00771">
    <property type="entry name" value="ThrRS_core"/>
    <property type="match status" value="1"/>
</dbReference>
<dbReference type="FunFam" id="3.10.20.30:FF:000005">
    <property type="entry name" value="Threonine--tRNA ligase"/>
    <property type="match status" value="1"/>
</dbReference>
<dbReference type="FunFam" id="3.30.54.20:FF:000002">
    <property type="entry name" value="Threonine--tRNA ligase"/>
    <property type="match status" value="1"/>
</dbReference>
<dbReference type="FunFam" id="3.30.930.10:FF:000002">
    <property type="entry name" value="Threonine--tRNA ligase"/>
    <property type="match status" value="1"/>
</dbReference>
<dbReference type="FunFam" id="3.40.50.800:FF:000001">
    <property type="entry name" value="Threonine--tRNA ligase"/>
    <property type="match status" value="1"/>
</dbReference>
<dbReference type="FunFam" id="3.30.980.10:FF:000005">
    <property type="entry name" value="Threonyl-tRNA synthetase, mitochondrial"/>
    <property type="match status" value="1"/>
</dbReference>
<dbReference type="Gene3D" id="3.10.20.30">
    <property type="match status" value="1"/>
</dbReference>
<dbReference type="Gene3D" id="3.30.54.20">
    <property type="match status" value="1"/>
</dbReference>
<dbReference type="Gene3D" id="3.40.50.800">
    <property type="entry name" value="Anticodon-binding domain"/>
    <property type="match status" value="1"/>
</dbReference>
<dbReference type="Gene3D" id="3.30.930.10">
    <property type="entry name" value="Bira Bifunctional Protein, Domain 2"/>
    <property type="match status" value="1"/>
</dbReference>
<dbReference type="Gene3D" id="3.30.980.10">
    <property type="entry name" value="Threonyl-trna Synthetase, Chain A, domain 2"/>
    <property type="match status" value="1"/>
</dbReference>
<dbReference type="HAMAP" id="MF_00184">
    <property type="entry name" value="Thr_tRNA_synth"/>
    <property type="match status" value="1"/>
</dbReference>
<dbReference type="InterPro" id="IPR002314">
    <property type="entry name" value="aa-tRNA-synt_IIb"/>
</dbReference>
<dbReference type="InterPro" id="IPR006195">
    <property type="entry name" value="aa-tRNA-synth_II"/>
</dbReference>
<dbReference type="InterPro" id="IPR045864">
    <property type="entry name" value="aa-tRNA-synth_II/BPL/LPL"/>
</dbReference>
<dbReference type="InterPro" id="IPR004154">
    <property type="entry name" value="Anticodon-bd"/>
</dbReference>
<dbReference type="InterPro" id="IPR036621">
    <property type="entry name" value="Anticodon-bd_dom_sf"/>
</dbReference>
<dbReference type="InterPro" id="IPR012675">
    <property type="entry name" value="Beta-grasp_dom_sf"/>
</dbReference>
<dbReference type="InterPro" id="IPR004095">
    <property type="entry name" value="TGS"/>
</dbReference>
<dbReference type="InterPro" id="IPR012676">
    <property type="entry name" value="TGS-like"/>
</dbReference>
<dbReference type="InterPro" id="IPR002320">
    <property type="entry name" value="Thr-tRNA-ligase_IIa"/>
</dbReference>
<dbReference type="InterPro" id="IPR018163">
    <property type="entry name" value="Thr/Ala-tRNA-synth_IIc_edit"/>
</dbReference>
<dbReference type="InterPro" id="IPR047246">
    <property type="entry name" value="ThrRS_anticodon"/>
</dbReference>
<dbReference type="InterPro" id="IPR033728">
    <property type="entry name" value="ThrRS_core"/>
</dbReference>
<dbReference type="InterPro" id="IPR012947">
    <property type="entry name" value="tRNA_SAD"/>
</dbReference>
<dbReference type="NCBIfam" id="TIGR00418">
    <property type="entry name" value="thrS"/>
    <property type="match status" value="1"/>
</dbReference>
<dbReference type="PANTHER" id="PTHR11451:SF56">
    <property type="entry name" value="THREONINE--TRNA LIGASE 1"/>
    <property type="match status" value="1"/>
</dbReference>
<dbReference type="PANTHER" id="PTHR11451">
    <property type="entry name" value="THREONINE-TRNA LIGASE"/>
    <property type="match status" value="1"/>
</dbReference>
<dbReference type="Pfam" id="PF03129">
    <property type="entry name" value="HGTP_anticodon"/>
    <property type="match status" value="1"/>
</dbReference>
<dbReference type="Pfam" id="PF02824">
    <property type="entry name" value="TGS"/>
    <property type="match status" value="1"/>
</dbReference>
<dbReference type="Pfam" id="PF00587">
    <property type="entry name" value="tRNA-synt_2b"/>
    <property type="match status" value="1"/>
</dbReference>
<dbReference type="Pfam" id="PF07973">
    <property type="entry name" value="tRNA_SAD"/>
    <property type="match status" value="1"/>
</dbReference>
<dbReference type="PRINTS" id="PR01047">
    <property type="entry name" value="TRNASYNTHTHR"/>
</dbReference>
<dbReference type="SMART" id="SM00863">
    <property type="entry name" value="tRNA_SAD"/>
    <property type="match status" value="1"/>
</dbReference>
<dbReference type="SUPFAM" id="SSF52954">
    <property type="entry name" value="Class II aaRS ABD-related"/>
    <property type="match status" value="1"/>
</dbReference>
<dbReference type="SUPFAM" id="SSF55681">
    <property type="entry name" value="Class II aaRS and biotin synthetases"/>
    <property type="match status" value="1"/>
</dbReference>
<dbReference type="SUPFAM" id="SSF81271">
    <property type="entry name" value="TGS-like"/>
    <property type="match status" value="1"/>
</dbReference>
<dbReference type="SUPFAM" id="SSF55186">
    <property type="entry name" value="ThrRS/AlaRS common domain"/>
    <property type="match status" value="1"/>
</dbReference>
<dbReference type="PROSITE" id="PS50862">
    <property type="entry name" value="AA_TRNA_LIGASE_II"/>
    <property type="match status" value="1"/>
</dbReference>
<dbReference type="PROSITE" id="PS51880">
    <property type="entry name" value="TGS"/>
    <property type="match status" value="1"/>
</dbReference>
<keyword id="KW-0030">Aminoacyl-tRNA synthetase</keyword>
<keyword id="KW-0067">ATP-binding</keyword>
<keyword id="KW-0963">Cytoplasm</keyword>
<keyword id="KW-0436">Ligase</keyword>
<keyword id="KW-0479">Metal-binding</keyword>
<keyword id="KW-0547">Nucleotide-binding</keyword>
<keyword id="KW-0648">Protein biosynthesis</keyword>
<keyword id="KW-0694">RNA-binding</keyword>
<keyword id="KW-0820">tRNA-binding</keyword>
<keyword id="KW-0862">Zinc</keyword>
<name>SYT_STRZP</name>
<comment type="function">
    <text evidence="1">Catalyzes the attachment of threonine to tRNA(Thr) in a two-step reaction: L-threonine is first activated by ATP to form Thr-AMP and then transferred to the acceptor end of tRNA(Thr). Also edits incorrectly charged L-seryl-tRNA(Thr).</text>
</comment>
<comment type="catalytic activity">
    <reaction evidence="1">
        <text>tRNA(Thr) + L-threonine + ATP = L-threonyl-tRNA(Thr) + AMP + diphosphate + H(+)</text>
        <dbReference type="Rhea" id="RHEA:24624"/>
        <dbReference type="Rhea" id="RHEA-COMP:9670"/>
        <dbReference type="Rhea" id="RHEA-COMP:9704"/>
        <dbReference type="ChEBI" id="CHEBI:15378"/>
        <dbReference type="ChEBI" id="CHEBI:30616"/>
        <dbReference type="ChEBI" id="CHEBI:33019"/>
        <dbReference type="ChEBI" id="CHEBI:57926"/>
        <dbReference type="ChEBI" id="CHEBI:78442"/>
        <dbReference type="ChEBI" id="CHEBI:78534"/>
        <dbReference type="ChEBI" id="CHEBI:456215"/>
        <dbReference type="EC" id="6.1.1.3"/>
    </reaction>
</comment>
<comment type="cofactor">
    <cofactor evidence="1">
        <name>Zn(2+)</name>
        <dbReference type="ChEBI" id="CHEBI:29105"/>
    </cofactor>
    <text evidence="1">Binds 1 zinc ion per subunit.</text>
</comment>
<comment type="subunit">
    <text evidence="1">Homodimer.</text>
</comment>
<comment type="subcellular location">
    <subcellularLocation>
        <location evidence="1">Cytoplasm</location>
    </subcellularLocation>
</comment>
<comment type="similarity">
    <text evidence="1">Belongs to the class-II aminoacyl-tRNA synthetase family.</text>
</comment>
<accession>C1CLX1</accession>
<proteinExistence type="inferred from homology"/>
<organism>
    <name type="scientific">Streptococcus pneumoniae (strain P1031)</name>
    <dbReference type="NCBI Taxonomy" id="488223"/>
    <lineage>
        <taxon>Bacteria</taxon>
        <taxon>Bacillati</taxon>
        <taxon>Bacillota</taxon>
        <taxon>Bacilli</taxon>
        <taxon>Lactobacillales</taxon>
        <taxon>Streptococcaceae</taxon>
        <taxon>Streptococcus</taxon>
    </lineage>
</organism>
<sequence>MINITFPDGAVREFESGVTTFEIAQSISNSLAKKALAGKFNGKLIDTTRAITEDGSIEIVTPDHEDALPILRHSAAHLFAQAARRLFPDIHLGVGPAIEDGFYYDTDNTAGQISNEDLPRIEEEMQKIVKENFPSIREEVTKDEAREIFKNDPYKLELIEEHSEDEGGLTIYRQGEYVDLCRGPHVPSTGRIQIFHLLHVAGAYWRGNSDNAMMQRIYGTAWFDKKDLKNYLQMREEAKERDHRKLGKELDLFIISQEVGQGLPFWLPNGATIRRELERYIVNKELASGYQHVYTPPLASVELYKTSGHWDHYQEDMFPTMDMGDGEEFVLRPMNCPHHIQVFKHHVHSYRELPIRIAEIGMMHRYEKSGALTGLQRVREMSLNDGHLFVTPEQIQEEFQRALQLIIDVYEDFNLTDYRFRLSLRDPQDTHKYFDNDEMWENAQTMLRAALDEMGVNYFEAEGEAAFYGPKLDIQIKTALGKEETLSTIQLDFLLPERFDLKYIGADGEDHRPVMIHRGVISTMERFTAILIENYKGAFPTWLAPHQVTLIPVSNEKHVDYAWEVAKKLRDRGVRADVDERNEKMQFKIRASQTSKIPYQLIVGDKEMEDETVNVRRYGQKETQTVSVDNFVQAILADIANKSRVEK</sequence>
<protein>
    <recommendedName>
        <fullName evidence="1">Threonine--tRNA ligase</fullName>
        <ecNumber evidence="1">6.1.1.3</ecNumber>
    </recommendedName>
    <alternativeName>
        <fullName evidence="1">Threonyl-tRNA synthetase</fullName>
        <shortName evidence="1">ThrRS</shortName>
    </alternativeName>
</protein>
<feature type="chain" id="PRO_1000199572" description="Threonine--tRNA ligase">
    <location>
        <begin position="1"/>
        <end position="647"/>
    </location>
</feature>
<feature type="domain" description="TGS" evidence="2">
    <location>
        <begin position="1"/>
        <end position="61"/>
    </location>
</feature>
<feature type="region of interest" description="Catalytic" evidence="1">
    <location>
        <begin position="242"/>
        <end position="540"/>
    </location>
</feature>
<feature type="binding site" evidence="1">
    <location>
        <position position="336"/>
    </location>
    <ligand>
        <name>Zn(2+)</name>
        <dbReference type="ChEBI" id="CHEBI:29105"/>
    </ligand>
</feature>
<feature type="binding site" evidence="1">
    <location>
        <position position="387"/>
    </location>
    <ligand>
        <name>Zn(2+)</name>
        <dbReference type="ChEBI" id="CHEBI:29105"/>
    </ligand>
</feature>
<feature type="binding site" evidence="1">
    <location>
        <position position="517"/>
    </location>
    <ligand>
        <name>Zn(2+)</name>
        <dbReference type="ChEBI" id="CHEBI:29105"/>
    </ligand>
</feature>
<evidence type="ECO:0000255" key="1">
    <source>
        <dbReference type="HAMAP-Rule" id="MF_00184"/>
    </source>
</evidence>
<evidence type="ECO:0000255" key="2">
    <source>
        <dbReference type="PROSITE-ProRule" id="PRU01228"/>
    </source>
</evidence>
<gene>
    <name evidence="1" type="primary">thrS</name>
    <name type="ordered locus">SPP_1650</name>
</gene>